<keyword id="KW-0479">Metal-binding</keyword>
<keyword id="KW-0665">Pyrimidine biosynthesis</keyword>
<keyword id="KW-1185">Reference proteome</keyword>
<keyword id="KW-0862">Zinc</keyword>
<dbReference type="EMBL" id="BA000021">
    <property type="protein sequence ID" value="BAC24736.1"/>
    <property type="molecule type" value="Genomic_DNA"/>
</dbReference>
<dbReference type="SMR" id="Q8D1W6"/>
<dbReference type="STRING" id="36870.gene:10369102"/>
<dbReference type="KEGG" id="wbr:pyrI"/>
<dbReference type="eggNOG" id="COG1781">
    <property type="taxonomic scope" value="Bacteria"/>
</dbReference>
<dbReference type="HOGENOM" id="CLU_128576_0_0_6"/>
<dbReference type="OrthoDB" id="5599321at2"/>
<dbReference type="Proteomes" id="UP000000562">
    <property type="component" value="Chromosome"/>
</dbReference>
<dbReference type="GO" id="GO:0009347">
    <property type="term" value="C:aspartate carbamoyltransferase complex"/>
    <property type="evidence" value="ECO:0007669"/>
    <property type="project" value="InterPro"/>
</dbReference>
<dbReference type="GO" id="GO:0046872">
    <property type="term" value="F:metal ion binding"/>
    <property type="evidence" value="ECO:0007669"/>
    <property type="project" value="UniProtKB-KW"/>
</dbReference>
<dbReference type="GO" id="GO:0006207">
    <property type="term" value="P:'de novo' pyrimidine nucleobase biosynthetic process"/>
    <property type="evidence" value="ECO:0007669"/>
    <property type="project" value="InterPro"/>
</dbReference>
<dbReference type="GO" id="GO:0006221">
    <property type="term" value="P:pyrimidine nucleotide biosynthetic process"/>
    <property type="evidence" value="ECO:0007669"/>
    <property type="project" value="UniProtKB-UniRule"/>
</dbReference>
<dbReference type="Gene3D" id="2.30.30.20">
    <property type="entry name" value="Aspartate carbamoyltransferase regulatory subunit, C-terminal domain"/>
    <property type="match status" value="1"/>
</dbReference>
<dbReference type="Gene3D" id="3.30.70.140">
    <property type="entry name" value="Aspartate carbamoyltransferase regulatory subunit, N-terminal domain"/>
    <property type="match status" value="1"/>
</dbReference>
<dbReference type="HAMAP" id="MF_00002">
    <property type="entry name" value="Asp_carb_tr_reg"/>
    <property type="match status" value="1"/>
</dbReference>
<dbReference type="InterPro" id="IPR020545">
    <property type="entry name" value="Asp_carbamoyltransf_reg_N"/>
</dbReference>
<dbReference type="InterPro" id="IPR002801">
    <property type="entry name" value="Asp_carbamoylTrfase_reg"/>
</dbReference>
<dbReference type="InterPro" id="IPR020542">
    <property type="entry name" value="Asp_carbamoyltrfase_reg_C"/>
</dbReference>
<dbReference type="InterPro" id="IPR036792">
    <property type="entry name" value="Asp_carbatrfase_reg_C_sf"/>
</dbReference>
<dbReference type="InterPro" id="IPR036793">
    <property type="entry name" value="Asp_carbatrfase_reg_N_sf"/>
</dbReference>
<dbReference type="NCBIfam" id="TIGR00240">
    <property type="entry name" value="ATCase_reg"/>
    <property type="match status" value="1"/>
</dbReference>
<dbReference type="PANTHER" id="PTHR35805">
    <property type="entry name" value="ASPARTATE CARBAMOYLTRANSFERASE REGULATORY CHAIN"/>
    <property type="match status" value="1"/>
</dbReference>
<dbReference type="PANTHER" id="PTHR35805:SF1">
    <property type="entry name" value="ASPARTATE CARBAMOYLTRANSFERASE REGULATORY CHAIN"/>
    <property type="match status" value="1"/>
</dbReference>
<dbReference type="Pfam" id="PF01948">
    <property type="entry name" value="PyrI"/>
    <property type="match status" value="1"/>
</dbReference>
<dbReference type="Pfam" id="PF02748">
    <property type="entry name" value="PyrI_C"/>
    <property type="match status" value="1"/>
</dbReference>
<dbReference type="SUPFAM" id="SSF57825">
    <property type="entry name" value="Aspartate carbamoyltransferase, Regulatory-chain, C-terminal domain"/>
    <property type="match status" value="1"/>
</dbReference>
<dbReference type="SUPFAM" id="SSF54893">
    <property type="entry name" value="Aspartate carbamoyltransferase, Regulatory-chain, N-terminal domain"/>
    <property type="match status" value="1"/>
</dbReference>
<comment type="function">
    <text evidence="1">Involved in allosteric regulation of aspartate carbamoyltransferase.</text>
</comment>
<comment type="cofactor">
    <cofactor evidence="1">
        <name>Zn(2+)</name>
        <dbReference type="ChEBI" id="CHEBI:29105"/>
    </cofactor>
    <text evidence="1">Binds 1 zinc ion per subunit.</text>
</comment>
<comment type="subunit">
    <text evidence="1">Contains catalytic and regulatory chains.</text>
</comment>
<comment type="similarity">
    <text evidence="1">Belongs to the PyrI family.</text>
</comment>
<sequence>MPQYNKLQVEAIFGGTVIDHIPAQVGLKLLSLFKWLHTKERITMGLNLPSNQQKKKDLIKLENVLLNEDQANQLSIYAPLATVNQIKNYIVIKKQKLKLPKIINGILSCPNENCISKVELKAADFIVKIKLNKIYLKCKYCERDFDHKIVTKI</sequence>
<feature type="chain" id="PRO_0000142323" description="Aspartate carbamoyltransferase regulatory chain">
    <location>
        <begin position="1"/>
        <end position="153"/>
    </location>
</feature>
<feature type="binding site" evidence="1">
    <location>
        <position position="109"/>
    </location>
    <ligand>
        <name>Zn(2+)</name>
        <dbReference type="ChEBI" id="CHEBI:29105"/>
    </ligand>
</feature>
<feature type="binding site" evidence="1">
    <location>
        <position position="114"/>
    </location>
    <ligand>
        <name>Zn(2+)</name>
        <dbReference type="ChEBI" id="CHEBI:29105"/>
    </ligand>
</feature>
<feature type="binding site" evidence="1">
    <location>
        <position position="138"/>
    </location>
    <ligand>
        <name>Zn(2+)</name>
        <dbReference type="ChEBI" id="CHEBI:29105"/>
    </ligand>
</feature>
<feature type="binding site" evidence="1">
    <location>
        <position position="141"/>
    </location>
    <ligand>
        <name>Zn(2+)</name>
        <dbReference type="ChEBI" id="CHEBI:29105"/>
    </ligand>
</feature>
<reference key="1">
    <citation type="journal article" date="2002" name="Nat. Genet.">
        <title>Genome sequence of the endocellular obligate symbiont of tsetse flies, Wigglesworthia glossinidia.</title>
        <authorList>
            <person name="Akman L."/>
            <person name="Yamashita A."/>
            <person name="Watanabe H."/>
            <person name="Oshima K."/>
            <person name="Shiba T."/>
            <person name="Hattori M."/>
            <person name="Aksoy S."/>
        </authorList>
    </citation>
    <scope>NUCLEOTIDE SEQUENCE [LARGE SCALE GENOMIC DNA]</scope>
</reference>
<proteinExistence type="inferred from homology"/>
<evidence type="ECO:0000255" key="1">
    <source>
        <dbReference type="HAMAP-Rule" id="MF_00002"/>
    </source>
</evidence>
<accession>Q8D1W6</accession>
<gene>
    <name evidence="1" type="primary">pyrI</name>
    <name type="ordered locus">WIGBR5900</name>
</gene>
<protein>
    <recommendedName>
        <fullName evidence="1">Aspartate carbamoyltransferase regulatory chain</fullName>
    </recommendedName>
</protein>
<organism>
    <name type="scientific">Wigglesworthia glossinidia brevipalpis</name>
    <dbReference type="NCBI Taxonomy" id="36870"/>
    <lineage>
        <taxon>Bacteria</taxon>
        <taxon>Pseudomonadati</taxon>
        <taxon>Pseudomonadota</taxon>
        <taxon>Gammaproteobacteria</taxon>
        <taxon>Enterobacterales</taxon>
        <taxon>Erwiniaceae</taxon>
        <taxon>Wigglesworthia</taxon>
    </lineage>
</organism>
<name>PYRI_WIGBR</name>